<sequence>MSKIIGIDLGTTNSCVAVLEGGEPKVIPNPEGNRTTPSVVAFKNGERLVGEVAKRQAITNPNTIISIKRHMGTDYKVEIEGKKYTPQEISAIILQYLKSYAEDYLGEPVTRAVITVPAYFNDAQRQATKDAGRIAGLEVERIINEPTAAALAYGLDKEEDQTILVYDLGGGTFDVSILELGDGVFEVKATAGDNHLGGDDFDQVIIDYLVEQFKQEHGIDLSKDKMALQRLKDAAEKAKKELSGVTQTQISLPFISANETGPLHLETTLTRAKFEELSAHLVERTMGPVRQALQDAGLTPSDIDKVILVGGSTRIPAVQEAIKRELGKEPHKGVNPDEVVAIGAAIQGGVIAGEVKDVVLLDVTPLSLGIETMGGVFTKLIERNTTIPTSKSQIFTTAADNQTTVDIHVLQGERPMAADNKTLGRFQLTDIPPAPRGVPQIEVTFDIDANGIVHVRAKDLGTNKEQSITIKSSSGLSEEEIQRMIKEAEENAEADRKRKEAAELRNEADQLVFTTEKTLKEVEGKVDEAEVKKAQEAKDALKAALEKNDIDDIRKKKEALQEIVQQLSIKLYEQAAKQAQAQQQAGAGGAAKKDENVVDAEFEEVKDDK</sequence>
<comment type="function">
    <text evidence="1">Acts as a chaperone.</text>
</comment>
<comment type="induction">
    <text evidence="1">By stress conditions e.g. heat shock.</text>
</comment>
<comment type="similarity">
    <text evidence="1">Belongs to the heat shock protein 70 family.</text>
</comment>
<gene>
    <name evidence="1" type="primary">dnaK</name>
    <name type="ordered locus">GWCH70_2437</name>
</gene>
<organism>
    <name type="scientific">Geobacillus sp. (strain WCH70)</name>
    <dbReference type="NCBI Taxonomy" id="471223"/>
    <lineage>
        <taxon>Bacteria</taxon>
        <taxon>Bacillati</taxon>
        <taxon>Bacillota</taxon>
        <taxon>Bacilli</taxon>
        <taxon>Bacillales</taxon>
        <taxon>Anoxybacillaceae</taxon>
        <taxon>Geobacillus</taxon>
    </lineage>
</organism>
<name>DNAK_GEOSW</name>
<dbReference type="EMBL" id="CP001638">
    <property type="protein sequence ID" value="ACS25133.1"/>
    <property type="molecule type" value="Genomic_DNA"/>
</dbReference>
<dbReference type="SMR" id="C5D4U1"/>
<dbReference type="STRING" id="471223.GWCH70_2437"/>
<dbReference type="KEGG" id="gwc:GWCH70_2437"/>
<dbReference type="eggNOG" id="COG0443">
    <property type="taxonomic scope" value="Bacteria"/>
</dbReference>
<dbReference type="HOGENOM" id="CLU_005965_2_4_9"/>
<dbReference type="OrthoDB" id="9766019at2"/>
<dbReference type="GO" id="GO:0005524">
    <property type="term" value="F:ATP binding"/>
    <property type="evidence" value="ECO:0007669"/>
    <property type="project" value="UniProtKB-UniRule"/>
</dbReference>
<dbReference type="GO" id="GO:0140662">
    <property type="term" value="F:ATP-dependent protein folding chaperone"/>
    <property type="evidence" value="ECO:0007669"/>
    <property type="project" value="InterPro"/>
</dbReference>
<dbReference type="GO" id="GO:0051082">
    <property type="term" value="F:unfolded protein binding"/>
    <property type="evidence" value="ECO:0007669"/>
    <property type="project" value="InterPro"/>
</dbReference>
<dbReference type="CDD" id="cd10234">
    <property type="entry name" value="ASKHA_NBD_HSP70_DnaK-like"/>
    <property type="match status" value="1"/>
</dbReference>
<dbReference type="FunFam" id="2.60.34.10:FF:000014">
    <property type="entry name" value="Chaperone protein DnaK HSP70"/>
    <property type="match status" value="1"/>
</dbReference>
<dbReference type="FunFam" id="3.30.420.40:FF:000020">
    <property type="entry name" value="Chaperone protein HscA homolog"/>
    <property type="match status" value="1"/>
</dbReference>
<dbReference type="FunFam" id="3.30.420.40:FF:000545">
    <property type="entry name" value="Endoplasmic reticulum chaperone BiP"/>
    <property type="match status" value="1"/>
</dbReference>
<dbReference type="FunFam" id="1.20.1270.10:FF:000004">
    <property type="entry name" value="Molecular chaperone DnaK"/>
    <property type="match status" value="1"/>
</dbReference>
<dbReference type="FunFam" id="3.90.640.10:FF:000003">
    <property type="entry name" value="Molecular chaperone DnaK"/>
    <property type="match status" value="1"/>
</dbReference>
<dbReference type="Gene3D" id="1.20.1270.10">
    <property type="match status" value="1"/>
</dbReference>
<dbReference type="Gene3D" id="3.30.420.40">
    <property type="match status" value="2"/>
</dbReference>
<dbReference type="Gene3D" id="3.90.640.10">
    <property type="entry name" value="Actin, Chain A, domain 4"/>
    <property type="match status" value="1"/>
</dbReference>
<dbReference type="Gene3D" id="2.60.34.10">
    <property type="entry name" value="Substrate Binding Domain Of DNAk, Chain A, domain 1"/>
    <property type="match status" value="1"/>
</dbReference>
<dbReference type="HAMAP" id="MF_00332">
    <property type="entry name" value="DnaK"/>
    <property type="match status" value="1"/>
</dbReference>
<dbReference type="InterPro" id="IPR043129">
    <property type="entry name" value="ATPase_NBD"/>
</dbReference>
<dbReference type="InterPro" id="IPR012725">
    <property type="entry name" value="Chaperone_DnaK"/>
</dbReference>
<dbReference type="InterPro" id="IPR018181">
    <property type="entry name" value="Heat_shock_70_CS"/>
</dbReference>
<dbReference type="InterPro" id="IPR029048">
    <property type="entry name" value="HSP70_C_sf"/>
</dbReference>
<dbReference type="InterPro" id="IPR029047">
    <property type="entry name" value="HSP70_peptide-bd_sf"/>
</dbReference>
<dbReference type="InterPro" id="IPR013126">
    <property type="entry name" value="Hsp_70_fam"/>
</dbReference>
<dbReference type="NCBIfam" id="NF001413">
    <property type="entry name" value="PRK00290.1"/>
    <property type="match status" value="1"/>
</dbReference>
<dbReference type="NCBIfam" id="TIGR02350">
    <property type="entry name" value="prok_dnaK"/>
    <property type="match status" value="1"/>
</dbReference>
<dbReference type="PANTHER" id="PTHR19375">
    <property type="entry name" value="HEAT SHOCK PROTEIN 70KDA"/>
    <property type="match status" value="1"/>
</dbReference>
<dbReference type="Pfam" id="PF00012">
    <property type="entry name" value="HSP70"/>
    <property type="match status" value="1"/>
</dbReference>
<dbReference type="PRINTS" id="PR00301">
    <property type="entry name" value="HEATSHOCK70"/>
</dbReference>
<dbReference type="SUPFAM" id="SSF53067">
    <property type="entry name" value="Actin-like ATPase domain"/>
    <property type="match status" value="2"/>
</dbReference>
<dbReference type="SUPFAM" id="SSF100934">
    <property type="entry name" value="Heat shock protein 70kD (HSP70), C-terminal subdomain"/>
    <property type="match status" value="1"/>
</dbReference>
<dbReference type="SUPFAM" id="SSF100920">
    <property type="entry name" value="Heat shock protein 70kD (HSP70), peptide-binding domain"/>
    <property type="match status" value="1"/>
</dbReference>
<dbReference type="PROSITE" id="PS00297">
    <property type="entry name" value="HSP70_1"/>
    <property type="match status" value="1"/>
</dbReference>
<dbReference type="PROSITE" id="PS00329">
    <property type="entry name" value="HSP70_2"/>
    <property type="match status" value="1"/>
</dbReference>
<dbReference type="PROSITE" id="PS01036">
    <property type="entry name" value="HSP70_3"/>
    <property type="match status" value="1"/>
</dbReference>
<feature type="chain" id="PRO_1000205190" description="Chaperone protein DnaK">
    <location>
        <begin position="1"/>
        <end position="609"/>
    </location>
</feature>
<feature type="region of interest" description="Disordered" evidence="2">
    <location>
        <begin position="578"/>
        <end position="609"/>
    </location>
</feature>
<feature type="compositionally biased region" description="Acidic residues" evidence="2">
    <location>
        <begin position="597"/>
        <end position="609"/>
    </location>
</feature>
<feature type="modified residue" description="Phosphothreonine; by autocatalysis" evidence="1">
    <location>
        <position position="172"/>
    </location>
</feature>
<keyword id="KW-0067">ATP-binding</keyword>
<keyword id="KW-0143">Chaperone</keyword>
<keyword id="KW-0547">Nucleotide-binding</keyword>
<keyword id="KW-0597">Phosphoprotein</keyword>
<keyword id="KW-0346">Stress response</keyword>
<evidence type="ECO:0000255" key="1">
    <source>
        <dbReference type="HAMAP-Rule" id="MF_00332"/>
    </source>
</evidence>
<evidence type="ECO:0000256" key="2">
    <source>
        <dbReference type="SAM" id="MobiDB-lite"/>
    </source>
</evidence>
<proteinExistence type="inferred from homology"/>
<accession>C5D4U1</accession>
<reference key="1">
    <citation type="submission" date="2009-06" db="EMBL/GenBank/DDBJ databases">
        <title>Complete sequence of chromosome of Geopacillus sp. WCH70.</title>
        <authorList>
            <consortium name="US DOE Joint Genome Institute"/>
            <person name="Lucas S."/>
            <person name="Copeland A."/>
            <person name="Lapidus A."/>
            <person name="Glavina del Rio T."/>
            <person name="Dalin E."/>
            <person name="Tice H."/>
            <person name="Bruce D."/>
            <person name="Goodwin L."/>
            <person name="Pitluck S."/>
            <person name="Chertkov O."/>
            <person name="Brettin T."/>
            <person name="Detter J.C."/>
            <person name="Han C."/>
            <person name="Larimer F."/>
            <person name="Land M."/>
            <person name="Hauser L."/>
            <person name="Kyrpides N."/>
            <person name="Mikhailova N."/>
            <person name="Brumm P."/>
            <person name="Mead D.A."/>
            <person name="Richardson P."/>
        </authorList>
    </citation>
    <scope>NUCLEOTIDE SEQUENCE [LARGE SCALE GENOMIC DNA]</scope>
    <source>
        <strain>WCH70</strain>
    </source>
</reference>
<protein>
    <recommendedName>
        <fullName evidence="1">Chaperone protein DnaK</fullName>
    </recommendedName>
    <alternativeName>
        <fullName evidence="1">HSP70</fullName>
    </alternativeName>
    <alternativeName>
        <fullName evidence="1">Heat shock 70 kDa protein</fullName>
    </alternativeName>
    <alternativeName>
        <fullName evidence="1">Heat shock protein 70</fullName>
    </alternativeName>
</protein>